<reference key="1">
    <citation type="submission" date="2006-05" db="EMBL/GenBank/DDBJ databases">
        <title>Complete sequence of chromosome of Silicibacter sp. TM1040.</title>
        <authorList>
            <consortium name="US DOE Joint Genome Institute"/>
            <person name="Copeland A."/>
            <person name="Lucas S."/>
            <person name="Lapidus A."/>
            <person name="Barry K."/>
            <person name="Detter J.C."/>
            <person name="Glavina del Rio T."/>
            <person name="Hammon N."/>
            <person name="Israni S."/>
            <person name="Dalin E."/>
            <person name="Tice H."/>
            <person name="Pitluck S."/>
            <person name="Brettin T."/>
            <person name="Bruce D."/>
            <person name="Han C."/>
            <person name="Tapia R."/>
            <person name="Goodwin L."/>
            <person name="Thompson L.S."/>
            <person name="Gilna P."/>
            <person name="Schmutz J."/>
            <person name="Larimer F."/>
            <person name="Land M."/>
            <person name="Hauser L."/>
            <person name="Kyrpides N."/>
            <person name="Kim E."/>
            <person name="Belas R."/>
            <person name="Moran M.A."/>
            <person name="Buchan A."/>
            <person name="Gonzalez J.M."/>
            <person name="Schell M.A."/>
            <person name="Sun F."/>
            <person name="Richardson P."/>
        </authorList>
    </citation>
    <scope>NUCLEOTIDE SEQUENCE [LARGE SCALE GENOMIC DNA]</scope>
    <source>
        <strain>TM1040</strain>
    </source>
</reference>
<accession>Q1GCL9</accession>
<sequence length="627" mass="69081">MFHVKHSHYDVVVVGGGHAGTEAAHASARMGVRTALVTLRRDGIGVMSCNPAIGGLGKGHLVREIDALDGVMGRVADLAGIQFRLLNRRKGPAVQGPRAQADRSIYRKEMLRATEAQSNLDIIEGEVVDFLMESPTRVRGIILDDQSEIRAECVVLTSGTFLNGVIHIGNKSSSGGRMGDRPSIKLAERLKSFELPLGRLKTGTPPRLDGRTINWDILDSQPGDEDPTLFSFLSTNTSAPQIACGITHTNEKTHEIIRDNLELSAMYGGHIEGVGPRYCPSIEDKIVRFADKTSHQIFLEPEGVNDHTVYPNGISTSLPEDVQVDYVRSIVGLENAEVLQPGYAIEYDYVDPRALRSTLELRDVEGLYLAGQINGTTGYEEAAAQGLVAGLNAASHRLKQQEIVFGRSNSYIGVMIDDLITNGVTEPYRMFTSRAEFRLSLRADNADQRLTPIGYDLGCISEVRRSEFDRKMDAITRTKSALTSVLLTPKQLLEAGIQVNQDGNKRNGLDVLAFPKVEFDDILPLFPELADTETSIREQVTRDSLYANYIARQEKEVASLKRDEQYRIPRDFSYEIDGLSMELRQKLERSRPESLAQAARIDGMTPAALALMLGSLKKLSRGESKAS</sequence>
<evidence type="ECO:0000255" key="1">
    <source>
        <dbReference type="HAMAP-Rule" id="MF_00129"/>
    </source>
</evidence>
<organism>
    <name type="scientific">Ruegeria sp. (strain TM1040)</name>
    <name type="common">Silicibacter sp.</name>
    <dbReference type="NCBI Taxonomy" id="292414"/>
    <lineage>
        <taxon>Bacteria</taxon>
        <taxon>Pseudomonadati</taxon>
        <taxon>Pseudomonadota</taxon>
        <taxon>Alphaproteobacteria</taxon>
        <taxon>Rhodobacterales</taxon>
        <taxon>Roseobacteraceae</taxon>
        <taxon>Ruegeria</taxon>
    </lineage>
</organism>
<feature type="chain" id="PRO_0000345334" description="tRNA uridine 5-carboxymethylaminomethyl modification enzyme MnmG">
    <location>
        <begin position="1"/>
        <end position="627"/>
    </location>
</feature>
<feature type="binding site" evidence="1">
    <location>
        <begin position="15"/>
        <end position="20"/>
    </location>
    <ligand>
        <name>FAD</name>
        <dbReference type="ChEBI" id="CHEBI:57692"/>
    </ligand>
</feature>
<feature type="binding site" evidence="1">
    <location>
        <position position="127"/>
    </location>
    <ligand>
        <name>FAD</name>
        <dbReference type="ChEBI" id="CHEBI:57692"/>
    </ligand>
</feature>
<feature type="binding site" evidence="1">
    <location>
        <position position="183"/>
    </location>
    <ligand>
        <name>FAD</name>
        <dbReference type="ChEBI" id="CHEBI:57692"/>
    </ligand>
</feature>
<feature type="binding site" evidence="1">
    <location>
        <begin position="275"/>
        <end position="289"/>
    </location>
    <ligand>
        <name>NAD(+)</name>
        <dbReference type="ChEBI" id="CHEBI:57540"/>
    </ligand>
</feature>
<feature type="binding site" evidence="1">
    <location>
        <position position="372"/>
    </location>
    <ligand>
        <name>FAD</name>
        <dbReference type="ChEBI" id="CHEBI:57692"/>
    </ligand>
</feature>
<name>MNMG_RUEST</name>
<gene>
    <name evidence="1" type="primary">mnmG</name>
    <name evidence="1" type="synonym">gidA</name>
    <name type="ordered locus">TM1040_2865</name>
</gene>
<keyword id="KW-0963">Cytoplasm</keyword>
<keyword id="KW-0274">FAD</keyword>
<keyword id="KW-0285">Flavoprotein</keyword>
<keyword id="KW-0520">NAD</keyword>
<keyword id="KW-1185">Reference proteome</keyword>
<keyword id="KW-0819">tRNA processing</keyword>
<protein>
    <recommendedName>
        <fullName evidence="1">tRNA uridine 5-carboxymethylaminomethyl modification enzyme MnmG</fullName>
    </recommendedName>
    <alternativeName>
        <fullName evidence="1">Glucose-inhibited division protein A</fullName>
    </alternativeName>
</protein>
<comment type="function">
    <text evidence="1">NAD-binding protein involved in the addition of a carboxymethylaminomethyl (cmnm) group at the wobble position (U34) of certain tRNAs, forming tRNA-cmnm(5)s(2)U34.</text>
</comment>
<comment type="cofactor">
    <cofactor evidence="1">
        <name>FAD</name>
        <dbReference type="ChEBI" id="CHEBI:57692"/>
    </cofactor>
</comment>
<comment type="subunit">
    <text evidence="1">Homodimer. Heterotetramer of two MnmE and two MnmG subunits.</text>
</comment>
<comment type="subcellular location">
    <subcellularLocation>
        <location evidence="1">Cytoplasm</location>
    </subcellularLocation>
</comment>
<comment type="similarity">
    <text evidence="1">Belongs to the MnmG family.</text>
</comment>
<dbReference type="EMBL" id="CP000377">
    <property type="protein sequence ID" value="ABF65597.1"/>
    <property type="molecule type" value="Genomic_DNA"/>
</dbReference>
<dbReference type="SMR" id="Q1GCL9"/>
<dbReference type="STRING" id="292414.TM1040_2865"/>
<dbReference type="KEGG" id="sit:TM1040_2865"/>
<dbReference type="eggNOG" id="COG0445">
    <property type="taxonomic scope" value="Bacteria"/>
</dbReference>
<dbReference type="HOGENOM" id="CLU_007831_2_2_5"/>
<dbReference type="Proteomes" id="UP000000636">
    <property type="component" value="Chromosome"/>
</dbReference>
<dbReference type="GO" id="GO:0005829">
    <property type="term" value="C:cytosol"/>
    <property type="evidence" value="ECO:0007669"/>
    <property type="project" value="TreeGrafter"/>
</dbReference>
<dbReference type="GO" id="GO:0050660">
    <property type="term" value="F:flavin adenine dinucleotide binding"/>
    <property type="evidence" value="ECO:0007669"/>
    <property type="project" value="UniProtKB-UniRule"/>
</dbReference>
<dbReference type="GO" id="GO:0030488">
    <property type="term" value="P:tRNA methylation"/>
    <property type="evidence" value="ECO:0007669"/>
    <property type="project" value="TreeGrafter"/>
</dbReference>
<dbReference type="GO" id="GO:0002098">
    <property type="term" value="P:tRNA wobble uridine modification"/>
    <property type="evidence" value="ECO:0007669"/>
    <property type="project" value="InterPro"/>
</dbReference>
<dbReference type="FunFam" id="3.50.50.60:FF:000082">
    <property type="entry name" value="protein MTO1 homolog, mitochondrial isoform X1"/>
    <property type="match status" value="1"/>
</dbReference>
<dbReference type="FunFam" id="1.10.150.570:FF:000001">
    <property type="entry name" value="tRNA uridine 5-carboxymethylaminomethyl modification enzyme MnmG"/>
    <property type="match status" value="1"/>
</dbReference>
<dbReference type="FunFam" id="3.50.50.60:FF:000002">
    <property type="entry name" value="tRNA uridine 5-carboxymethylaminomethyl modification enzyme MnmG"/>
    <property type="match status" value="1"/>
</dbReference>
<dbReference type="Gene3D" id="3.50.50.60">
    <property type="entry name" value="FAD/NAD(P)-binding domain"/>
    <property type="match status" value="2"/>
</dbReference>
<dbReference type="Gene3D" id="1.10.150.570">
    <property type="entry name" value="GidA associated domain, C-terminal subdomain"/>
    <property type="match status" value="1"/>
</dbReference>
<dbReference type="Gene3D" id="1.10.10.1800">
    <property type="entry name" value="tRNA uridine 5-carboxymethylaminomethyl modification enzyme MnmG/GidA"/>
    <property type="match status" value="1"/>
</dbReference>
<dbReference type="HAMAP" id="MF_00129">
    <property type="entry name" value="MnmG_GidA"/>
    <property type="match status" value="1"/>
</dbReference>
<dbReference type="InterPro" id="IPR036188">
    <property type="entry name" value="FAD/NAD-bd_sf"/>
</dbReference>
<dbReference type="InterPro" id="IPR049312">
    <property type="entry name" value="GIDA_C_N"/>
</dbReference>
<dbReference type="InterPro" id="IPR004416">
    <property type="entry name" value="MnmG"/>
</dbReference>
<dbReference type="InterPro" id="IPR002218">
    <property type="entry name" value="MnmG-rel"/>
</dbReference>
<dbReference type="InterPro" id="IPR020595">
    <property type="entry name" value="MnmG-rel_CS"/>
</dbReference>
<dbReference type="InterPro" id="IPR026904">
    <property type="entry name" value="MnmG_C"/>
</dbReference>
<dbReference type="InterPro" id="IPR047001">
    <property type="entry name" value="MnmG_C_subdom"/>
</dbReference>
<dbReference type="InterPro" id="IPR044920">
    <property type="entry name" value="MnmG_C_subdom_sf"/>
</dbReference>
<dbReference type="InterPro" id="IPR040131">
    <property type="entry name" value="MnmG_N"/>
</dbReference>
<dbReference type="NCBIfam" id="TIGR00136">
    <property type="entry name" value="mnmG_gidA"/>
    <property type="match status" value="1"/>
</dbReference>
<dbReference type="PANTHER" id="PTHR11806">
    <property type="entry name" value="GLUCOSE INHIBITED DIVISION PROTEIN A"/>
    <property type="match status" value="1"/>
</dbReference>
<dbReference type="PANTHER" id="PTHR11806:SF0">
    <property type="entry name" value="PROTEIN MTO1 HOMOLOG, MITOCHONDRIAL"/>
    <property type="match status" value="1"/>
</dbReference>
<dbReference type="Pfam" id="PF01134">
    <property type="entry name" value="GIDA"/>
    <property type="match status" value="1"/>
</dbReference>
<dbReference type="Pfam" id="PF21680">
    <property type="entry name" value="GIDA_C_1st"/>
    <property type="match status" value="1"/>
</dbReference>
<dbReference type="Pfam" id="PF13932">
    <property type="entry name" value="SAM_GIDA_C"/>
    <property type="match status" value="1"/>
</dbReference>
<dbReference type="SMART" id="SM01228">
    <property type="entry name" value="GIDA_assoc_3"/>
    <property type="match status" value="1"/>
</dbReference>
<dbReference type="SUPFAM" id="SSF51905">
    <property type="entry name" value="FAD/NAD(P)-binding domain"/>
    <property type="match status" value="1"/>
</dbReference>
<dbReference type="PROSITE" id="PS01280">
    <property type="entry name" value="GIDA_1"/>
    <property type="match status" value="1"/>
</dbReference>
<dbReference type="PROSITE" id="PS01281">
    <property type="entry name" value="GIDA_2"/>
    <property type="match status" value="1"/>
</dbReference>
<proteinExistence type="inferred from homology"/>